<sequence>MRRTRRPRFVLMNKMDDLNLHYRFLNWRRRIREIREVRAFRYQERFKHILVDGDTLSYHGNSGEVGCYVASRPLTKDSNYFEVSIVDSGVRGTIAVGLVPQYYSLDHQPGWLPDSVAYHADDGKLYNGRAKGRQFGSKCNSGDRIGCGIEPVSFDVQTAQIFFTKNGKRVGSTIMPMSPDGLFPAVGMHSLGEEVRLHLNAELGREDDSVMMVDSYEDEWGRLHDVRVCGTLLEYLGKGKSIVDVGLAQARHPLSTRSHYFEVEIVDPGEKCYIALGLARKDYPKNRHPGWSRGSVAYHADDGKIFHGSGVGDPFGPRCYKGDIMGCGIMFPRDYILDSEGDSDDSCDTVILSPTARAVRNVRNVMYLHQEGEEEEEEEEEEEDGEEIEPEHEGRKVVVFFTRNGKIIGKKDAVVPSGGFFPTIGMLSCGEKVKVDLHPLSG</sequence>
<gene>
    <name type="primary">SPRYD3</name>
</gene>
<name>SPRY3_HUMAN</name>
<feature type="chain" id="PRO_0000240854" description="SPRY domain-containing protein 3">
    <location>
        <begin position="1"/>
        <end position="442"/>
    </location>
</feature>
<feature type="domain" description="B30.2/SPRY" evidence="1">
    <location>
        <begin position="17"/>
        <end position="204"/>
    </location>
</feature>
<feature type="region of interest" description="Disordered" evidence="2">
    <location>
        <begin position="371"/>
        <end position="394"/>
    </location>
</feature>
<feature type="compositionally biased region" description="Acidic residues" evidence="2">
    <location>
        <begin position="372"/>
        <end position="390"/>
    </location>
</feature>
<feature type="sequence conflict" description="In Ref. 1; BAC11144." evidence="3" ref="1">
    <original>V</original>
    <variation>I</variation>
    <location>
        <position position="359"/>
    </location>
</feature>
<feature type="strand" evidence="4">
    <location>
        <begin position="46"/>
        <end position="52"/>
    </location>
</feature>
<feature type="strand" evidence="4">
    <location>
        <begin position="55"/>
        <end position="58"/>
    </location>
</feature>
<feature type="strand" evidence="4">
    <location>
        <begin position="66"/>
        <end position="69"/>
    </location>
</feature>
<feature type="strand" evidence="4">
    <location>
        <begin position="76"/>
        <end position="78"/>
    </location>
</feature>
<feature type="strand" evidence="4">
    <location>
        <begin position="80"/>
        <end position="88"/>
    </location>
</feature>
<feature type="turn" evidence="4">
    <location>
        <begin position="89"/>
        <end position="91"/>
    </location>
</feature>
<feature type="strand" evidence="4">
    <location>
        <begin position="95"/>
        <end position="99"/>
    </location>
</feature>
<feature type="strand" evidence="4">
    <location>
        <begin position="116"/>
        <end position="119"/>
    </location>
</feature>
<feature type="turn" evidence="4">
    <location>
        <begin position="120"/>
        <end position="122"/>
    </location>
</feature>
<feature type="strand" evidence="4">
    <location>
        <begin position="125"/>
        <end position="130"/>
    </location>
</feature>
<feature type="strand" evidence="4">
    <location>
        <begin position="144"/>
        <end position="149"/>
    </location>
</feature>
<feature type="helix" evidence="4">
    <location>
        <begin position="151"/>
        <end position="154"/>
    </location>
</feature>
<feature type="strand" evidence="4">
    <location>
        <begin position="155"/>
        <end position="157"/>
    </location>
</feature>
<feature type="strand" evidence="4">
    <location>
        <begin position="159"/>
        <end position="165"/>
    </location>
</feature>
<feature type="strand" evidence="4">
    <location>
        <begin position="168"/>
        <end position="177"/>
    </location>
</feature>
<feature type="strand" evidence="4">
    <location>
        <begin position="179"/>
        <end position="181"/>
    </location>
</feature>
<feature type="strand" evidence="4">
    <location>
        <begin position="183"/>
        <end position="188"/>
    </location>
</feature>
<feature type="strand" evidence="4">
    <location>
        <begin position="193"/>
        <end position="198"/>
    </location>
</feature>
<evidence type="ECO:0000255" key="1">
    <source>
        <dbReference type="PROSITE-ProRule" id="PRU00548"/>
    </source>
</evidence>
<evidence type="ECO:0000256" key="2">
    <source>
        <dbReference type="SAM" id="MobiDB-lite"/>
    </source>
</evidence>
<evidence type="ECO:0000305" key="3"/>
<evidence type="ECO:0007829" key="4">
    <source>
        <dbReference type="PDB" id="2YYO"/>
    </source>
</evidence>
<proteinExistence type="evidence at protein level"/>
<keyword id="KW-0002">3D-structure</keyword>
<keyword id="KW-1267">Proteomics identification</keyword>
<keyword id="KW-1185">Reference proteome</keyword>
<dbReference type="EMBL" id="AK027706">
    <property type="protein sequence ID" value="BAB55311.1"/>
    <property type="molecule type" value="mRNA"/>
</dbReference>
<dbReference type="EMBL" id="AK074694">
    <property type="protein sequence ID" value="BAC11144.1"/>
    <property type="molecule type" value="mRNA"/>
</dbReference>
<dbReference type="EMBL" id="CH471054">
    <property type="protein sequence ID" value="EAW96662.1"/>
    <property type="molecule type" value="Genomic_DNA"/>
</dbReference>
<dbReference type="EMBL" id="BC136312">
    <property type="protein sequence ID" value="AAI36313.1"/>
    <property type="molecule type" value="mRNA"/>
</dbReference>
<dbReference type="CCDS" id="CCDS8845.1"/>
<dbReference type="RefSeq" id="NP_116229.1">
    <property type="nucleotide sequence ID" value="NM_032840.3"/>
</dbReference>
<dbReference type="PDB" id="2YYO">
    <property type="method" value="X-ray"/>
    <property type="resolution" value="2.00 A"/>
    <property type="chains" value="A=46-203"/>
</dbReference>
<dbReference type="PDBsum" id="2YYO"/>
<dbReference type="SMR" id="Q8NCJ5"/>
<dbReference type="BioGRID" id="124361">
    <property type="interactions" value="59"/>
</dbReference>
<dbReference type="FunCoup" id="Q8NCJ5">
    <property type="interactions" value="673"/>
</dbReference>
<dbReference type="IntAct" id="Q8NCJ5">
    <property type="interactions" value="26"/>
</dbReference>
<dbReference type="MINT" id="Q8NCJ5"/>
<dbReference type="STRING" id="9606.ENSP00000301463"/>
<dbReference type="iPTMnet" id="Q8NCJ5"/>
<dbReference type="PhosphoSitePlus" id="Q8NCJ5"/>
<dbReference type="SwissPalm" id="Q8NCJ5"/>
<dbReference type="BioMuta" id="SPRYD3"/>
<dbReference type="DMDM" id="116242798"/>
<dbReference type="jPOST" id="Q8NCJ5"/>
<dbReference type="MassIVE" id="Q8NCJ5"/>
<dbReference type="PaxDb" id="9606-ENSP00000301463"/>
<dbReference type="PeptideAtlas" id="Q8NCJ5"/>
<dbReference type="ProteomicsDB" id="72900"/>
<dbReference type="Pumba" id="Q8NCJ5"/>
<dbReference type="Antibodypedia" id="26884">
    <property type="antibodies" value="53 antibodies from 18 providers"/>
</dbReference>
<dbReference type="DNASU" id="84926"/>
<dbReference type="Ensembl" id="ENST00000301463.9">
    <property type="protein sequence ID" value="ENSP00000301463.4"/>
    <property type="gene ID" value="ENSG00000167778.9"/>
</dbReference>
<dbReference type="GeneID" id="84926"/>
<dbReference type="KEGG" id="hsa:84926"/>
<dbReference type="MANE-Select" id="ENST00000301463.9">
    <property type="protein sequence ID" value="ENSP00000301463.4"/>
    <property type="RefSeq nucleotide sequence ID" value="NM_032840.3"/>
    <property type="RefSeq protein sequence ID" value="NP_116229.1"/>
</dbReference>
<dbReference type="UCSC" id="uc001sbt.2">
    <property type="organism name" value="human"/>
</dbReference>
<dbReference type="AGR" id="HGNC:25920"/>
<dbReference type="CTD" id="84926"/>
<dbReference type="DisGeNET" id="84926"/>
<dbReference type="GeneCards" id="SPRYD3"/>
<dbReference type="HGNC" id="HGNC:25920">
    <property type="gene designation" value="SPRYD3"/>
</dbReference>
<dbReference type="HPA" id="ENSG00000167778">
    <property type="expression patterns" value="Low tissue specificity"/>
</dbReference>
<dbReference type="neXtProt" id="NX_Q8NCJ5"/>
<dbReference type="OpenTargets" id="ENSG00000167778"/>
<dbReference type="PharmGKB" id="PA143485621"/>
<dbReference type="VEuPathDB" id="HostDB:ENSG00000167778"/>
<dbReference type="eggNOG" id="KOG1477">
    <property type="taxonomic scope" value="Eukaryota"/>
</dbReference>
<dbReference type="GeneTree" id="ENSGT00940000158675"/>
<dbReference type="HOGENOM" id="CLU_053348_0_0_1"/>
<dbReference type="InParanoid" id="Q8NCJ5"/>
<dbReference type="OMA" id="EEDDTMM"/>
<dbReference type="OrthoDB" id="25503at2759"/>
<dbReference type="PAN-GO" id="Q8NCJ5">
    <property type="GO annotations" value="3 GO annotations based on evolutionary models"/>
</dbReference>
<dbReference type="PhylomeDB" id="Q8NCJ5"/>
<dbReference type="TreeFam" id="TF331658"/>
<dbReference type="PathwayCommons" id="Q8NCJ5"/>
<dbReference type="SignaLink" id="Q8NCJ5"/>
<dbReference type="BioGRID-ORCS" id="84926">
    <property type="hits" value="18 hits in 1158 CRISPR screens"/>
</dbReference>
<dbReference type="ChiTaRS" id="SPRYD3">
    <property type="organism name" value="human"/>
</dbReference>
<dbReference type="EvolutionaryTrace" id="Q8NCJ5"/>
<dbReference type="GenomeRNAi" id="84926"/>
<dbReference type="Pharos" id="Q8NCJ5">
    <property type="development level" value="Tdark"/>
</dbReference>
<dbReference type="PRO" id="PR:Q8NCJ5"/>
<dbReference type="Proteomes" id="UP000005640">
    <property type="component" value="Chromosome 12"/>
</dbReference>
<dbReference type="RNAct" id="Q8NCJ5">
    <property type="molecule type" value="protein"/>
</dbReference>
<dbReference type="Bgee" id="ENSG00000167778">
    <property type="expression patterns" value="Expressed in prefrontal cortex and 178 other cell types or tissues"/>
</dbReference>
<dbReference type="ExpressionAtlas" id="Q8NCJ5">
    <property type="expression patterns" value="baseline and differential"/>
</dbReference>
<dbReference type="CDD" id="cd12908">
    <property type="entry name" value="SPRYD3"/>
    <property type="match status" value="2"/>
</dbReference>
<dbReference type="Gene3D" id="2.60.120.920">
    <property type="match status" value="2"/>
</dbReference>
<dbReference type="InterPro" id="IPR001870">
    <property type="entry name" value="B30.2/SPRY"/>
</dbReference>
<dbReference type="InterPro" id="IPR043136">
    <property type="entry name" value="B30.2/SPRY_sf"/>
</dbReference>
<dbReference type="InterPro" id="IPR013320">
    <property type="entry name" value="ConA-like_dom_sf"/>
</dbReference>
<dbReference type="InterPro" id="IPR003877">
    <property type="entry name" value="SPRY_dom"/>
</dbReference>
<dbReference type="InterPro" id="IPR035783">
    <property type="entry name" value="SPRYD3_SPRY"/>
</dbReference>
<dbReference type="InterPro" id="IPR050618">
    <property type="entry name" value="Ubq-SigPath_Reg"/>
</dbReference>
<dbReference type="PANTHER" id="PTHR12864">
    <property type="entry name" value="RAN BINDING PROTEIN 9-RELATED"/>
    <property type="match status" value="1"/>
</dbReference>
<dbReference type="Pfam" id="PF00622">
    <property type="entry name" value="SPRY"/>
    <property type="match status" value="2"/>
</dbReference>
<dbReference type="SMART" id="SM00449">
    <property type="entry name" value="SPRY"/>
    <property type="match status" value="2"/>
</dbReference>
<dbReference type="SUPFAM" id="SSF49899">
    <property type="entry name" value="Concanavalin A-like lectins/glucanases"/>
    <property type="match status" value="2"/>
</dbReference>
<dbReference type="PROSITE" id="PS50188">
    <property type="entry name" value="B302_SPRY"/>
    <property type="match status" value="1"/>
</dbReference>
<reference key="1">
    <citation type="journal article" date="2004" name="Nat. Genet.">
        <title>Complete sequencing and characterization of 21,243 full-length human cDNAs.</title>
        <authorList>
            <person name="Ota T."/>
            <person name="Suzuki Y."/>
            <person name="Nishikawa T."/>
            <person name="Otsuki T."/>
            <person name="Sugiyama T."/>
            <person name="Irie R."/>
            <person name="Wakamatsu A."/>
            <person name="Hayashi K."/>
            <person name="Sato H."/>
            <person name="Nagai K."/>
            <person name="Kimura K."/>
            <person name="Makita H."/>
            <person name="Sekine M."/>
            <person name="Obayashi M."/>
            <person name="Nishi T."/>
            <person name="Shibahara T."/>
            <person name="Tanaka T."/>
            <person name="Ishii S."/>
            <person name="Yamamoto J."/>
            <person name="Saito K."/>
            <person name="Kawai Y."/>
            <person name="Isono Y."/>
            <person name="Nakamura Y."/>
            <person name="Nagahari K."/>
            <person name="Murakami K."/>
            <person name="Yasuda T."/>
            <person name="Iwayanagi T."/>
            <person name="Wagatsuma M."/>
            <person name="Shiratori A."/>
            <person name="Sudo H."/>
            <person name="Hosoiri T."/>
            <person name="Kaku Y."/>
            <person name="Kodaira H."/>
            <person name="Kondo H."/>
            <person name="Sugawara M."/>
            <person name="Takahashi M."/>
            <person name="Kanda K."/>
            <person name="Yokoi T."/>
            <person name="Furuya T."/>
            <person name="Kikkawa E."/>
            <person name="Omura Y."/>
            <person name="Abe K."/>
            <person name="Kamihara K."/>
            <person name="Katsuta N."/>
            <person name="Sato K."/>
            <person name="Tanikawa M."/>
            <person name="Yamazaki M."/>
            <person name="Ninomiya K."/>
            <person name="Ishibashi T."/>
            <person name="Yamashita H."/>
            <person name="Murakawa K."/>
            <person name="Fujimori K."/>
            <person name="Tanai H."/>
            <person name="Kimata M."/>
            <person name="Watanabe M."/>
            <person name="Hiraoka S."/>
            <person name="Chiba Y."/>
            <person name="Ishida S."/>
            <person name="Ono Y."/>
            <person name="Takiguchi S."/>
            <person name="Watanabe S."/>
            <person name="Yosida M."/>
            <person name="Hotuta T."/>
            <person name="Kusano J."/>
            <person name="Kanehori K."/>
            <person name="Takahashi-Fujii A."/>
            <person name="Hara H."/>
            <person name="Tanase T.-O."/>
            <person name="Nomura Y."/>
            <person name="Togiya S."/>
            <person name="Komai F."/>
            <person name="Hara R."/>
            <person name="Takeuchi K."/>
            <person name="Arita M."/>
            <person name="Imose N."/>
            <person name="Musashino K."/>
            <person name="Yuuki H."/>
            <person name="Oshima A."/>
            <person name="Sasaki N."/>
            <person name="Aotsuka S."/>
            <person name="Yoshikawa Y."/>
            <person name="Matsunawa H."/>
            <person name="Ichihara T."/>
            <person name="Shiohata N."/>
            <person name="Sano S."/>
            <person name="Moriya S."/>
            <person name="Momiyama H."/>
            <person name="Satoh N."/>
            <person name="Takami S."/>
            <person name="Terashima Y."/>
            <person name="Suzuki O."/>
            <person name="Nakagawa S."/>
            <person name="Senoh A."/>
            <person name="Mizoguchi H."/>
            <person name="Goto Y."/>
            <person name="Shimizu F."/>
            <person name="Wakebe H."/>
            <person name="Hishigaki H."/>
            <person name="Watanabe T."/>
            <person name="Sugiyama A."/>
            <person name="Takemoto M."/>
            <person name="Kawakami B."/>
            <person name="Yamazaki M."/>
            <person name="Watanabe K."/>
            <person name="Kumagai A."/>
            <person name="Itakura S."/>
            <person name="Fukuzumi Y."/>
            <person name="Fujimori Y."/>
            <person name="Komiyama M."/>
            <person name="Tashiro H."/>
            <person name="Tanigami A."/>
            <person name="Fujiwara T."/>
            <person name="Ono T."/>
            <person name="Yamada K."/>
            <person name="Fujii Y."/>
            <person name="Ozaki K."/>
            <person name="Hirao M."/>
            <person name="Ohmori Y."/>
            <person name="Kawabata A."/>
            <person name="Hikiji T."/>
            <person name="Kobatake N."/>
            <person name="Inagaki H."/>
            <person name="Ikema Y."/>
            <person name="Okamoto S."/>
            <person name="Okitani R."/>
            <person name="Kawakami T."/>
            <person name="Noguchi S."/>
            <person name="Itoh T."/>
            <person name="Shigeta K."/>
            <person name="Senba T."/>
            <person name="Matsumura K."/>
            <person name="Nakajima Y."/>
            <person name="Mizuno T."/>
            <person name="Morinaga M."/>
            <person name="Sasaki M."/>
            <person name="Togashi T."/>
            <person name="Oyama M."/>
            <person name="Hata H."/>
            <person name="Watanabe M."/>
            <person name="Komatsu T."/>
            <person name="Mizushima-Sugano J."/>
            <person name="Satoh T."/>
            <person name="Shirai Y."/>
            <person name="Takahashi Y."/>
            <person name="Nakagawa K."/>
            <person name="Okumura K."/>
            <person name="Nagase T."/>
            <person name="Nomura N."/>
            <person name="Kikuchi H."/>
            <person name="Masuho Y."/>
            <person name="Yamashita R."/>
            <person name="Nakai K."/>
            <person name="Yada T."/>
            <person name="Nakamura Y."/>
            <person name="Ohara O."/>
            <person name="Isogai T."/>
            <person name="Sugano S."/>
        </authorList>
    </citation>
    <scope>NUCLEOTIDE SEQUENCE [LARGE SCALE MRNA]</scope>
    <source>
        <tissue>Mammary gland</tissue>
    </source>
</reference>
<reference key="2">
    <citation type="submission" date="2005-07" db="EMBL/GenBank/DDBJ databases">
        <authorList>
            <person name="Mural R.J."/>
            <person name="Istrail S."/>
            <person name="Sutton G.G."/>
            <person name="Florea L."/>
            <person name="Halpern A.L."/>
            <person name="Mobarry C.M."/>
            <person name="Lippert R."/>
            <person name="Walenz B."/>
            <person name="Shatkay H."/>
            <person name="Dew I."/>
            <person name="Miller J.R."/>
            <person name="Flanigan M.J."/>
            <person name="Edwards N.J."/>
            <person name="Bolanos R."/>
            <person name="Fasulo D."/>
            <person name="Halldorsson B.V."/>
            <person name="Hannenhalli S."/>
            <person name="Turner R."/>
            <person name="Yooseph S."/>
            <person name="Lu F."/>
            <person name="Nusskern D.R."/>
            <person name="Shue B.C."/>
            <person name="Zheng X.H."/>
            <person name="Zhong F."/>
            <person name="Delcher A.L."/>
            <person name="Huson D.H."/>
            <person name="Kravitz S.A."/>
            <person name="Mouchard L."/>
            <person name="Reinert K."/>
            <person name="Remington K.A."/>
            <person name="Clark A.G."/>
            <person name="Waterman M.S."/>
            <person name="Eichler E.E."/>
            <person name="Adams M.D."/>
            <person name="Hunkapiller M.W."/>
            <person name="Myers E.W."/>
            <person name="Venter J.C."/>
        </authorList>
    </citation>
    <scope>NUCLEOTIDE SEQUENCE [LARGE SCALE GENOMIC DNA]</scope>
</reference>
<reference key="3">
    <citation type="journal article" date="2004" name="Genome Res.">
        <title>The status, quality, and expansion of the NIH full-length cDNA project: the Mammalian Gene Collection (MGC).</title>
        <authorList>
            <consortium name="The MGC Project Team"/>
        </authorList>
    </citation>
    <scope>NUCLEOTIDE SEQUENCE [LARGE SCALE MRNA]</scope>
    <source>
        <tissue>Testis</tissue>
    </source>
</reference>
<reference key="4">
    <citation type="submission" date="2008-05" db="PDB data bank">
        <title>Crystal structure of human SPRY domain.</title>
        <authorList>
            <consortium name="RIKEN structural genomics initiative (RSGI)"/>
        </authorList>
    </citation>
    <scope>X-RAY CRYSTALLOGRAPHY (2.0 ANGSTROMS) OF 46-203</scope>
</reference>
<protein>
    <recommendedName>
        <fullName>SPRY domain-containing protein 3</fullName>
    </recommendedName>
</protein>
<organism>
    <name type="scientific">Homo sapiens</name>
    <name type="common">Human</name>
    <dbReference type="NCBI Taxonomy" id="9606"/>
    <lineage>
        <taxon>Eukaryota</taxon>
        <taxon>Metazoa</taxon>
        <taxon>Chordata</taxon>
        <taxon>Craniata</taxon>
        <taxon>Vertebrata</taxon>
        <taxon>Euteleostomi</taxon>
        <taxon>Mammalia</taxon>
        <taxon>Eutheria</taxon>
        <taxon>Euarchontoglires</taxon>
        <taxon>Primates</taxon>
        <taxon>Haplorrhini</taxon>
        <taxon>Catarrhini</taxon>
        <taxon>Hominidae</taxon>
        <taxon>Homo</taxon>
    </lineage>
</organism>
<accession>Q8NCJ5</accession>
<accession>B9EG99</accession>
<accession>Q96SK5</accession>